<sequence>MLSSTLRVAVVCVSNVNRSMEAHSILRRKGLSVRSFGTESHVRLPGPRPNRPVVYDFATTYKEMYNDLLRKDRERYTRNGILHILGRNERIKPGPERFQECTDSFDVIFTCEESVYDTVVEDLCSREQQTFQPVHVINMEIQDTLEDATLGAFLICEICQCLQQSDDMEDNLEELLLQMEEKAGKSFLHTVCFY</sequence>
<protein>
    <recommendedName>
        <fullName evidence="2">RNA polymerase II subunit A C-terminal domain phosphatase SSU72 like protein 5</fullName>
    </recommendedName>
    <alternativeName>
        <fullName evidence="2">RNA polymerase II subunit A C-terminal domain phosphatase SSU72L5</fullName>
        <shortName>CTD phosphatase SSU72L5</shortName>
        <ecNumber evidence="1">3.1.3.16</ecNumber>
    </alternativeName>
</protein>
<comment type="function">
    <text evidence="1">Protein phosphatase that catalyzes the dephosphorylation of the C-terminal domain of RNA polymerase II. Plays a role in RNA processing and termination.</text>
</comment>
<comment type="catalytic activity">
    <reaction evidence="1">
        <text>O-phospho-L-seryl-[protein] + H2O = L-seryl-[protein] + phosphate</text>
        <dbReference type="Rhea" id="RHEA:20629"/>
        <dbReference type="Rhea" id="RHEA-COMP:9863"/>
        <dbReference type="Rhea" id="RHEA-COMP:11604"/>
        <dbReference type="ChEBI" id="CHEBI:15377"/>
        <dbReference type="ChEBI" id="CHEBI:29999"/>
        <dbReference type="ChEBI" id="CHEBI:43474"/>
        <dbReference type="ChEBI" id="CHEBI:83421"/>
        <dbReference type="EC" id="3.1.3.16"/>
    </reaction>
</comment>
<comment type="catalytic activity">
    <reaction evidence="1">
        <text>O-phospho-L-threonyl-[protein] + H2O = L-threonyl-[protein] + phosphate</text>
        <dbReference type="Rhea" id="RHEA:47004"/>
        <dbReference type="Rhea" id="RHEA-COMP:11060"/>
        <dbReference type="Rhea" id="RHEA-COMP:11605"/>
        <dbReference type="ChEBI" id="CHEBI:15377"/>
        <dbReference type="ChEBI" id="CHEBI:30013"/>
        <dbReference type="ChEBI" id="CHEBI:43474"/>
        <dbReference type="ChEBI" id="CHEBI:61977"/>
        <dbReference type="EC" id="3.1.3.16"/>
    </reaction>
</comment>
<comment type="subcellular location">
    <subcellularLocation>
        <location evidence="1">Nucleus</location>
    </subcellularLocation>
</comment>
<comment type="similarity">
    <text evidence="2">Belongs to the SSU72 phosphatase family.</text>
</comment>
<feature type="chain" id="PRO_0000457674" description="RNA polymerase II subunit A C-terminal domain phosphatase SSU72 like protein 5">
    <location>
        <begin position="1"/>
        <end position="194"/>
    </location>
</feature>
<organism>
    <name type="scientific">Homo sapiens</name>
    <name type="common">Human</name>
    <dbReference type="NCBI Taxonomy" id="9606"/>
    <lineage>
        <taxon>Eukaryota</taxon>
        <taxon>Metazoa</taxon>
        <taxon>Chordata</taxon>
        <taxon>Craniata</taxon>
        <taxon>Vertebrata</taxon>
        <taxon>Euteleostomi</taxon>
        <taxon>Mammalia</taxon>
        <taxon>Eutheria</taxon>
        <taxon>Euarchontoglires</taxon>
        <taxon>Primates</taxon>
        <taxon>Haplorrhini</taxon>
        <taxon>Catarrhini</taxon>
        <taxon>Hominidae</taxon>
        <taxon>Homo</taxon>
    </lineage>
</organism>
<dbReference type="EC" id="3.1.3.16" evidence="1"/>
<dbReference type="EMBL" id="AC018793">
    <property type="status" value="NOT_ANNOTATED_CDS"/>
    <property type="molecule type" value="Genomic_DNA"/>
</dbReference>
<dbReference type="RefSeq" id="NP_001400931.1">
    <property type="nucleotide sequence ID" value="NM_001414002.2"/>
</dbReference>
<dbReference type="SMR" id="A0A1W2PQ64"/>
<dbReference type="FunCoup" id="A0A1W2PQ64">
    <property type="interactions" value="261"/>
</dbReference>
<dbReference type="STRING" id="9606.ENSP00000491949"/>
<dbReference type="BioMuta" id="ENSG00000284018"/>
<dbReference type="MassIVE" id="A0A1W2PQ64"/>
<dbReference type="Ensembl" id="ENST00000639584.2">
    <property type="protein sequence ID" value="ENSP00000491949.1"/>
    <property type="gene ID" value="ENSG00000284018.2"/>
</dbReference>
<dbReference type="GeneID" id="196120"/>
<dbReference type="MANE-Select" id="ENST00000639584.2">
    <property type="protein sequence ID" value="ENSP00000491949.1"/>
    <property type="RefSeq nucleotide sequence ID" value="NM_001414002.2"/>
    <property type="RefSeq protein sequence ID" value="NP_001400931.1"/>
</dbReference>
<dbReference type="AGR" id="HGNC:43624"/>
<dbReference type="GeneCards" id="SSU72L5"/>
<dbReference type="HGNC" id="HGNC:43624">
    <property type="gene designation" value="SSU72L5"/>
</dbReference>
<dbReference type="VEuPathDB" id="HostDB:ENSG00000284018"/>
<dbReference type="GeneTree" id="ENSGT00390000010165"/>
<dbReference type="InParanoid" id="A0A1W2PQ64"/>
<dbReference type="OMA" id="FTCTERV"/>
<dbReference type="PAN-GO" id="A0A1W2PQ64">
    <property type="GO annotations" value="5 GO annotations based on evolutionary models"/>
</dbReference>
<dbReference type="PRO" id="PR:A0A1W2PQ64"/>
<dbReference type="Proteomes" id="UP000005640">
    <property type="component" value="Chromosome 11"/>
</dbReference>
<dbReference type="RNAct" id="A0A1W2PQ64">
    <property type="molecule type" value="protein"/>
</dbReference>
<dbReference type="Bgee" id="ENSG00000284018">
    <property type="expression patterns" value="Expressed in muscle tissue and 12 other cell types or tissues"/>
</dbReference>
<dbReference type="GO" id="GO:0005847">
    <property type="term" value="C:mRNA cleavage and polyadenylation specificity factor complex"/>
    <property type="evidence" value="ECO:0000318"/>
    <property type="project" value="GO_Central"/>
</dbReference>
<dbReference type="GO" id="GO:0008420">
    <property type="term" value="F:RNA polymerase II CTD heptapeptide repeat phosphatase activity"/>
    <property type="evidence" value="ECO:0000318"/>
    <property type="project" value="GO_Central"/>
</dbReference>
<dbReference type="GO" id="GO:0006397">
    <property type="term" value="P:mRNA processing"/>
    <property type="evidence" value="ECO:0007669"/>
    <property type="project" value="UniProtKB-KW"/>
</dbReference>
<dbReference type="GO" id="GO:0006369">
    <property type="term" value="P:termination of RNA polymerase II transcription"/>
    <property type="evidence" value="ECO:0000318"/>
    <property type="project" value="GO_Central"/>
</dbReference>
<dbReference type="FunFam" id="3.40.50.2300:FF:000039">
    <property type="entry name" value="RNA polymerase II subunit A C-terminal domain phosphatase"/>
    <property type="match status" value="1"/>
</dbReference>
<dbReference type="FunFam" id="3.40.50.2300:FF:000066">
    <property type="entry name" value="RNA polymerase II subunit A C-terminal domain phosphatase SSU72"/>
    <property type="match status" value="1"/>
</dbReference>
<dbReference type="Gene3D" id="3.40.50.2300">
    <property type="match status" value="2"/>
</dbReference>
<dbReference type="InterPro" id="IPR036196">
    <property type="entry name" value="Ptyr_pPase_sf"/>
</dbReference>
<dbReference type="InterPro" id="IPR006811">
    <property type="entry name" value="RNA_pol_II_suA"/>
</dbReference>
<dbReference type="PANTHER" id="PTHR20383">
    <property type="entry name" value="RNA POLYMERASE II SUBUNIT A C-TERMINAL DOMAIN PHOSPHATASE"/>
    <property type="match status" value="1"/>
</dbReference>
<dbReference type="Pfam" id="PF04722">
    <property type="entry name" value="Ssu72"/>
    <property type="match status" value="1"/>
</dbReference>
<dbReference type="SUPFAM" id="SSF52788">
    <property type="entry name" value="Phosphotyrosine protein phosphatases I"/>
    <property type="match status" value="1"/>
</dbReference>
<evidence type="ECO:0000250" key="1">
    <source>
        <dbReference type="UniProtKB" id="Q9NP77"/>
    </source>
</evidence>
<evidence type="ECO:0000305" key="2"/>
<evidence type="ECO:0000312" key="3">
    <source>
        <dbReference type="HGNC" id="HGNC:43624"/>
    </source>
</evidence>
<accession>A0A1W2PQ64</accession>
<keyword id="KW-0378">Hydrolase</keyword>
<keyword id="KW-0507">mRNA processing</keyword>
<keyword id="KW-0539">Nucleus</keyword>
<keyword id="KW-0904">Protein phosphatase</keyword>
<keyword id="KW-1185">Reference proteome</keyword>
<reference key="1">
    <citation type="journal article" date="2006" name="Nature">
        <title>Human chromosome 11 DNA sequence and analysis including novel gene identification.</title>
        <authorList>
            <person name="Taylor T.D."/>
            <person name="Noguchi H."/>
            <person name="Totoki Y."/>
            <person name="Toyoda A."/>
            <person name="Kuroki Y."/>
            <person name="Dewar K."/>
            <person name="Lloyd C."/>
            <person name="Itoh T."/>
            <person name="Takeda T."/>
            <person name="Kim D.-W."/>
            <person name="She X."/>
            <person name="Barlow K.F."/>
            <person name="Bloom T."/>
            <person name="Bruford E."/>
            <person name="Chang J.L."/>
            <person name="Cuomo C.A."/>
            <person name="Eichler E."/>
            <person name="FitzGerald M.G."/>
            <person name="Jaffe D.B."/>
            <person name="LaButti K."/>
            <person name="Nicol R."/>
            <person name="Park H.-S."/>
            <person name="Seaman C."/>
            <person name="Sougnez C."/>
            <person name="Yang X."/>
            <person name="Zimmer A.R."/>
            <person name="Zody M.C."/>
            <person name="Birren B.W."/>
            <person name="Nusbaum C."/>
            <person name="Fujiyama A."/>
            <person name="Hattori M."/>
            <person name="Rogers J."/>
            <person name="Lander E.S."/>
            <person name="Sakaki Y."/>
        </authorList>
    </citation>
    <scope>NUCLEOTIDE SEQUENCE [LARGE SCALE GENOMIC DNA]</scope>
</reference>
<proteinExistence type="inferred from homology"/>
<name>S72L5_HUMAN</name>
<gene>
    <name evidence="3" type="primary">SSU72L5</name>
</gene>